<comment type="function">
    <text>Light-harvesting photosynthetic bile pigment-protein from the phycobiliprotein complex. Allophycocyanin has a maximum absorption at approximately 650 nanometers.</text>
</comment>
<comment type="subunit">
    <text evidence="1">Heterodimer of an alpha and a beta chain.</text>
</comment>
<comment type="subcellular location">
    <subcellularLocation>
        <location evidence="1">Plastid</location>
        <location evidence="1">Chloroplast thylakoid membrane</location>
        <topology evidence="1">Peripheral membrane protein</topology>
        <orientation evidence="1">Stromal side</orientation>
    </subcellularLocation>
    <text evidence="1">Forms the core of the phycobilisome.</text>
</comment>
<comment type="PTM">
    <text evidence="1">Contains one covalently linked phycocyanobilin chromophore.</text>
</comment>
<comment type="similarity">
    <text evidence="2">Belongs to the phycobiliprotein family.</text>
</comment>
<gene>
    <name type="primary">apcB</name>
</gene>
<accession>P28556</accession>
<organism>
    <name type="scientific">Aglaothamnion neglectum</name>
    <name type="common">Red alga</name>
    <dbReference type="NCBI Taxonomy" id="2765"/>
    <lineage>
        <taxon>Eukaryota</taxon>
        <taxon>Rhodophyta</taxon>
        <taxon>Florideophyceae</taxon>
        <taxon>Rhodymeniophycidae</taxon>
        <taxon>Ceramiales</taxon>
        <taxon>Callithamniaceae</taxon>
        <taxon>Aglaothamnion</taxon>
    </lineage>
</organism>
<sequence length="161" mass="17335">MQDAITSVINTADVQGKYLDDSSLNKLKGYFATGELRVRAAATIAANAANIIKESVAKALLYSDITRPGGNMYTTRRFAACIRDLDYYLRLATYGMLAGDPSILDERVLDGLKETYNSLGVPIGATIQAIQAMKEVTSGLLGVDAGQEMALYFDYICSGLS</sequence>
<protein>
    <recommendedName>
        <fullName>Allophycocyanin beta chain</fullName>
    </recommendedName>
</protein>
<keyword id="KW-0042">Antenna complex</keyword>
<keyword id="KW-0089">Bile pigment</keyword>
<keyword id="KW-0150">Chloroplast</keyword>
<keyword id="KW-0157">Chromophore</keyword>
<keyword id="KW-0249">Electron transport</keyword>
<keyword id="KW-0472">Membrane</keyword>
<keyword id="KW-0488">Methylation</keyword>
<keyword id="KW-0602">Photosynthesis</keyword>
<keyword id="KW-0605">Phycobilisome</keyword>
<keyword id="KW-0934">Plastid</keyword>
<keyword id="KW-0793">Thylakoid</keyword>
<keyword id="KW-0813">Transport</keyword>
<proteinExistence type="inferred from homology"/>
<dbReference type="EMBL" id="Z11905">
    <property type="protein sequence ID" value="CAA77959.1"/>
    <property type="molecule type" value="Genomic_DNA"/>
</dbReference>
<dbReference type="PIR" id="S30938">
    <property type="entry name" value="S30938"/>
</dbReference>
<dbReference type="SMR" id="P28556"/>
<dbReference type="GO" id="GO:0009535">
    <property type="term" value="C:chloroplast thylakoid membrane"/>
    <property type="evidence" value="ECO:0007669"/>
    <property type="project" value="UniProtKB-SubCell"/>
</dbReference>
<dbReference type="GO" id="GO:0030089">
    <property type="term" value="C:phycobilisome"/>
    <property type="evidence" value="ECO:0007669"/>
    <property type="project" value="UniProtKB-KW"/>
</dbReference>
<dbReference type="GO" id="GO:0015979">
    <property type="term" value="P:photosynthesis"/>
    <property type="evidence" value="ECO:0007669"/>
    <property type="project" value="UniProtKB-KW"/>
</dbReference>
<dbReference type="CDD" id="cd12126">
    <property type="entry name" value="APC_beta"/>
    <property type="match status" value="1"/>
</dbReference>
<dbReference type="Gene3D" id="1.10.490.20">
    <property type="entry name" value="Phycocyanins"/>
    <property type="match status" value="1"/>
</dbReference>
<dbReference type="InterPro" id="IPR006245">
    <property type="entry name" value="Allophycocyanin_b"/>
</dbReference>
<dbReference type="InterPro" id="IPR009050">
    <property type="entry name" value="Globin-like_sf"/>
</dbReference>
<dbReference type="InterPro" id="IPR012128">
    <property type="entry name" value="Phycobilisome_asu/bsu"/>
</dbReference>
<dbReference type="InterPro" id="IPR038719">
    <property type="entry name" value="Phycobilisome_asu/bsu_sf"/>
</dbReference>
<dbReference type="NCBIfam" id="TIGR01337">
    <property type="entry name" value="apcB"/>
    <property type="match status" value="1"/>
</dbReference>
<dbReference type="PANTHER" id="PTHR34011:SF3">
    <property type="entry name" value="ALLOPHYCOCYANIN BETA CHAIN"/>
    <property type="match status" value="1"/>
</dbReference>
<dbReference type="PANTHER" id="PTHR34011">
    <property type="entry name" value="PHYCOBILISOME 32.1 KDA LINKER POLYPEPTIDE, PHYCOCYANIN-ASSOCIATED, ROD 2-RELATED"/>
    <property type="match status" value="1"/>
</dbReference>
<dbReference type="Pfam" id="PF00502">
    <property type="entry name" value="Phycobilisome"/>
    <property type="match status" value="1"/>
</dbReference>
<dbReference type="PIRSF" id="PIRSF000081">
    <property type="entry name" value="Phycocyanin"/>
    <property type="match status" value="1"/>
</dbReference>
<dbReference type="SUPFAM" id="SSF46458">
    <property type="entry name" value="Globin-like"/>
    <property type="match status" value="1"/>
</dbReference>
<name>APCB_AGLNE</name>
<evidence type="ECO:0000250" key="1"/>
<evidence type="ECO:0000305" key="2"/>
<feature type="chain" id="PRO_0000199087" description="Allophycocyanin beta chain">
    <location>
        <begin position="1"/>
        <end position="161"/>
    </location>
</feature>
<feature type="binding site" description="covalent" evidence="1">
    <location>
        <position position="81"/>
    </location>
    <ligand>
        <name>(2R,3E)-phycocyanobilin</name>
        <dbReference type="ChEBI" id="CHEBI:85275"/>
    </ligand>
</feature>
<feature type="modified residue" description="N4-methylasparagine" evidence="1">
    <location>
        <position position="71"/>
    </location>
</feature>
<reference key="1">
    <citation type="journal article" date="1993" name="Plant Mol. Biol.">
        <title>Characterization and transcript analysis of the major phycobiliprotein subunit genes from Aglaothamnion neglectum (Rhodophyta).</title>
        <authorList>
            <person name="Apt K.E."/>
            <person name="Grossman A.R."/>
        </authorList>
    </citation>
    <scope>NUCLEOTIDE SEQUENCE [GENOMIC DNA]</scope>
</reference>
<geneLocation type="chloroplast"/>